<feature type="chain" id="PRO_0000413562" description="Glutathione S-transferase U16">
    <location>
        <begin position="1"/>
        <end position="234"/>
    </location>
</feature>
<feature type="domain" description="GST N-terminal">
    <location>
        <begin position="5"/>
        <end position="85"/>
    </location>
</feature>
<feature type="domain" description="GST C-terminal">
    <location>
        <begin position="92"/>
        <end position="219"/>
    </location>
</feature>
<feature type="binding site" evidence="1">
    <location>
        <begin position="15"/>
        <end position="16"/>
    </location>
    <ligand>
        <name>glutathione</name>
        <dbReference type="ChEBI" id="CHEBI:57925"/>
    </ligand>
</feature>
<feature type="binding site" evidence="1">
    <location>
        <begin position="42"/>
        <end position="43"/>
    </location>
    <ligand>
        <name>glutathione</name>
        <dbReference type="ChEBI" id="CHEBI:57925"/>
    </ligand>
</feature>
<feature type="binding site" evidence="1">
    <location>
        <begin position="56"/>
        <end position="57"/>
    </location>
    <ligand>
        <name>glutathione</name>
        <dbReference type="ChEBI" id="CHEBI:57925"/>
    </ligand>
</feature>
<feature type="binding site" evidence="1">
    <location>
        <begin position="69"/>
        <end position="70"/>
    </location>
    <ligand>
        <name>glutathione</name>
        <dbReference type="ChEBI" id="CHEBI:57925"/>
    </ligand>
</feature>
<feature type="sequence conflict" description="In Ref. 3; AAK43857." evidence="3" ref="3">
    <original>D</original>
    <variation>V</variation>
    <location>
        <position position="186"/>
    </location>
</feature>
<protein>
    <recommendedName>
        <fullName>Glutathione S-transferase U16</fullName>
        <shortName>AtGSTU16</shortName>
        <ecNumber>2.5.1.18</ecNumber>
    </recommendedName>
    <alternativeName>
        <fullName>GST class-tau member 16</fullName>
    </alternativeName>
</protein>
<evidence type="ECO:0000250" key="1"/>
<evidence type="ECO:0000269" key="2">
    <source>
    </source>
</evidence>
<evidence type="ECO:0000305" key="3"/>
<name>GSTUG_ARATH</name>
<comment type="function">
    <text evidence="1">May be involved in the conjugation of reduced glutathione to a wide number of exogenous and endogenous hydrophobic electrophiles and have a detoxification role against certain herbicides.</text>
</comment>
<comment type="catalytic activity">
    <reaction>
        <text>RX + glutathione = an S-substituted glutathione + a halide anion + H(+)</text>
        <dbReference type="Rhea" id="RHEA:16437"/>
        <dbReference type="ChEBI" id="CHEBI:15378"/>
        <dbReference type="ChEBI" id="CHEBI:16042"/>
        <dbReference type="ChEBI" id="CHEBI:17792"/>
        <dbReference type="ChEBI" id="CHEBI:57925"/>
        <dbReference type="ChEBI" id="CHEBI:90779"/>
        <dbReference type="EC" id="2.5.1.18"/>
    </reaction>
</comment>
<comment type="subcellular location">
    <subcellularLocation>
        <location evidence="3">Cytoplasm</location>
        <location evidence="3">Cytosol</location>
    </subcellularLocation>
</comment>
<comment type="induction">
    <text evidence="2">By the fungal pathogen Verticillium dahliae.</text>
</comment>
<comment type="similarity">
    <text evidence="3">Belongs to the GST superfamily. Tau family.</text>
</comment>
<reference key="1">
    <citation type="journal article" date="2000" name="Nature">
        <title>Sequence and analysis of chromosome 1 of the plant Arabidopsis thaliana.</title>
        <authorList>
            <person name="Theologis A."/>
            <person name="Ecker J.R."/>
            <person name="Palm C.J."/>
            <person name="Federspiel N.A."/>
            <person name="Kaul S."/>
            <person name="White O."/>
            <person name="Alonso J."/>
            <person name="Altafi H."/>
            <person name="Araujo R."/>
            <person name="Bowman C.L."/>
            <person name="Brooks S.Y."/>
            <person name="Buehler E."/>
            <person name="Chan A."/>
            <person name="Chao Q."/>
            <person name="Chen H."/>
            <person name="Cheuk R.F."/>
            <person name="Chin C.W."/>
            <person name="Chung M.K."/>
            <person name="Conn L."/>
            <person name="Conway A.B."/>
            <person name="Conway A.R."/>
            <person name="Creasy T.H."/>
            <person name="Dewar K."/>
            <person name="Dunn P."/>
            <person name="Etgu P."/>
            <person name="Feldblyum T.V."/>
            <person name="Feng J.-D."/>
            <person name="Fong B."/>
            <person name="Fujii C.Y."/>
            <person name="Gill J.E."/>
            <person name="Goldsmith A.D."/>
            <person name="Haas B."/>
            <person name="Hansen N.F."/>
            <person name="Hughes B."/>
            <person name="Huizar L."/>
            <person name="Hunter J.L."/>
            <person name="Jenkins J."/>
            <person name="Johnson-Hopson C."/>
            <person name="Khan S."/>
            <person name="Khaykin E."/>
            <person name="Kim C.J."/>
            <person name="Koo H.L."/>
            <person name="Kremenetskaia I."/>
            <person name="Kurtz D.B."/>
            <person name="Kwan A."/>
            <person name="Lam B."/>
            <person name="Langin-Hooper S."/>
            <person name="Lee A."/>
            <person name="Lee J.M."/>
            <person name="Lenz C.A."/>
            <person name="Li J.H."/>
            <person name="Li Y.-P."/>
            <person name="Lin X."/>
            <person name="Liu S.X."/>
            <person name="Liu Z.A."/>
            <person name="Luros J.S."/>
            <person name="Maiti R."/>
            <person name="Marziali A."/>
            <person name="Militscher J."/>
            <person name="Miranda M."/>
            <person name="Nguyen M."/>
            <person name="Nierman W.C."/>
            <person name="Osborne B.I."/>
            <person name="Pai G."/>
            <person name="Peterson J."/>
            <person name="Pham P.K."/>
            <person name="Rizzo M."/>
            <person name="Rooney T."/>
            <person name="Rowley D."/>
            <person name="Sakano H."/>
            <person name="Salzberg S.L."/>
            <person name="Schwartz J.R."/>
            <person name="Shinn P."/>
            <person name="Southwick A.M."/>
            <person name="Sun H."/>
            <person name="Tallon L.J."/>
            <person name="Tambunga G."/>
            <person name="Toriumi M.J."/>
            <person name="Town C.D."/>
            <person name="Utterback T."/>
            <person name="Van Aken S."/>
            <person name="Vaysberg M."/>
            <person name="Vysotskaia V.S."/>
            <person name="Walker M."/>
            <person name="Wu D."/>
            <person name="Yu G."/>
            <person name="Fraser C.M."/>
            <person name="Venter J.C."/>
            <person name="Davis R.W."/>
        </authorList>
    </citation>
    <scope>NUCLEOTIDE SEQUENCE [LARGE SCALE GENOMIC DNA]</scope>
    <source>
        <strain>cv. Columbia</strain>
    </source>
</reference>
<reference key="2">
    <citation type="journal article" date="2017" name="Plant J.">
        <title>Araport11: a complete reannotation of the Arabidopsis thaliana reference genome.</title>
        <authorList>
            <person name="Cheng C.Y."/>
            <person name="Krishnakumar V."/>
            <person name="Chan A.P."/>
            <person name="Thibaud-Nissen F."/>
            <person name="Schobel S."/>
            <person name="Town C.D."/>
        </authorList>
    </citation>
    <scope>GENOME REANNOTATION</scope>
    <source>
        <strain>cv. Columbia</strain>
    </source>
</reference>
<reference key="3">
    <citation type="journal article" date="2003" name="Science">
        <title>Empirical analysis of transcriptional activity in the Arabidopsis genome.</title>
        <authorList>
            <person name="Yamada K."/>
            <person name="Lim J."/>
            <person name="Dale J.M."/>
            <person name="Chen H."/>
            <person name="Shinn P."/>
            <person name="Palm C.J."/>
            <person name="Southwick A.M."/>
            <person name="Wu H.C."/>
            <person name="Kim C.J."/>
            <person name="Nguyen M."/>
            <person name="Pham P.K."/>
            <person name="Cheuk R.F."/>
            <person name="Karlin-Newmann G."/>
            <person name="Liu S.X."/>
            <person name="Lam B."/>
            <person name="Sakano H."/>
            <person name="Wu T."/>
            <person name="Yu G."/>
            <person name="Miranda M."/>
            <person name="Quach H.L."/>
            <person name="Tripp M."/>
            <person name="Chang C.H."/>
            <person name="Lee J.M."/>
            <person name="Toriumi M.J."/>
            <person name="Chan M.M."/>
            <person name="Tang C.C."/>
            <person name="Onodera C.S."/>
            <person name="Deng J.M."/>
            <person name="Akiyama K."/>
            <person name="Ansari Y."/>
            <person name="Arakawa T."/>
            <person name="Banh J."/>
            <person name="Banno F."/>
            <person name="Bowser L."/>
            <person name="Brooks S.Y."/>
            <person name="Carninci P."/>
            <person name="Chao Q."/>
            <person name="Choy N."/>
            <person name="Enju A."/>
            <person name="Goldsmith A.D."/>
            <person name="Gurjal M."/>
            <person name="Hansen N.F."/>
            <person name="Hayashizaki Y."/>
            <person name="Johnson-Hopson C."/>
            <person name="Hsuan V.W."/>
            <person name="Iida K."/>
            <person name="Karnes M."/>
            <person name="Khan S."/>
            <person name="Koesema E."/>
            <person name="Ishida J."/>
            <person name="Jiang P.X."/>
            <person name="Jones T."/>
            <person name="Kawai J."/>
            <person name="Kamiya A."/>
            <person name="Meyers C."/>
            <person name="Nakajima M."/>
            <person name="Narusaka M."/>
            <person name="Seki M."/>
            <person name="Sakurai T."/>
            <person name="Satou M."/>
            <person name="Tamse R."/>
            <person name="Vaysberg M."/>
            <person name="Wallender E.K."/>
            <person name="Wong C."/>
            <person name="Yamamura Y."/>
            <person name="Yuan S."/>
            <person name="Shinozaki K."/>
            <person name="Davis R.W."/>
            <person name="Theologis A."/>
            <person name="Ecker J.R."/>
        </authorList>
    </citation>
    <scope>NUCLEOTIDE SEQUENCE [LARGE SCALE MRNA]</scope>
    <source>
        <strain>cv. Columbia</strain>
    </source>
</reference>
<reference key="4">
    <citation type="submission" date="2004-06" db="EMBL/GenBank/DDBJ databases">
        <title>Arabidopsis ORF clones.</title>
        <authorList>
            <person name="Cheuk R.F."/>
            <person name="Chen H."/>
            <person name="Kim C.J."/>
            <person name="Shinn P."/>
            <person name="Ecker J.R."/>
        </authorList>
    </citation>
    <scope>NUCLEOTIDE SEQUENCE [MRNA]</scope>
    <source>
        <strain>cv. Columbia</strain>
    </source>
</reference>
<reference key="5">
    <citation type="journal article" date="2002" name="Plant Mol. Biol.">
        <title>Probing the diversity of the Arabidopsis glutathione S-transferase gene family.</title>
        <authorList>
            <person name="Wagner U."/>
            <person name="Edwards R."/>
            <person name="Dixon D.P."/>
            <person name="Mauch F."/>
        </authorList>
    </citation>
    <scope>GENE FAMILY</scope>
    <scope>NOMENCLATURE</scope>
</reference>
<reference key="6">
    <citation type="journal article" date="2010" name="Mol. Plant Pathol.">
        <title>Ethylene perception via ETR1 is required in Arabidopsis infection by Verticillium dahliae.</title>
        <authorList>
            <person name="Pantelides I.S."/>
            <person name="Tjamos S.E."/>
            <person name="Paplomatas E.J."/>
        </authorList>
    </citation>
    <scope>INDUCTION</scope>
</reference>
<proteinExistence type="evidence at transcript level"/>
<sequence>MGEKEEVKLLGVWYSPYAIRPKIALRLKSVDYDYVEENLFGSKSELLLKSNPVHKKVPVLLHNNKPIVESLNIVEYIDETWNSSAPSILPSHPYDRALARFWSDFVDNKWFPALRMAAITKSEDAKAKAMEEVEEGLLQLEDAFVSISKGKPFFGGEAIGFMDICFGSFVVLLKAREKFKAEKLLDESKTPSLCKWADRFLSDETVKNVAPEIEKVAEFLQELEVRAQSAASRS</sequence>
<dbReference type="EC" id="2.5.1.18"/>
<dbReference type="EMBL" id="AC007258">
    <property type="protein sequence ID" value="AAD39312.1"/>
    <property type="molecule type" value="Genomic_DNA"/>
</dbReference>
<dbReference type="EMBL" id="AC009317">
    <property type="protein sequence ID" value="AAF79760.1"/>
    <property type="molecule type" value="Genomic_DNA"/>
</dbReference>
<dbReference type="EMBL" id="CP002684">
    <property type="protein sequence ID" value="AEE33605.1"/>
    <property type="molecule type" value="Genomic_DNA"/>
</dbReference>
<dbReference type="EMBL" id="AF370480">
    <property type="protein sequence ID" value="AAK43857.1"/>
    <property type="molecule type" value="mRNA"/>
</dbReference>
<dbReference type="EMBL" id="BT014880">
    <property type="protein sequence ID" value="AAT41863.1"/>
    <property type="molecule type" value="mRNA"/>
</dbReference>
<dbReference type="PIR" id="F96620">
    <property type="entry name" value="F96620"/>
</dbReference>
<dbReference type="RefSeq" id="NP_176178.1">
    <property type="nucleotide sequence ID" value="NM_104662.4"/>
</dbReference>
<dbReference type="SMR" id="Q9XIF8"/>
<dbReference type="FunCoup" id="Q9XIF8">
    <property type="interactions" value="151"/>
</dbReference>
<dbReference type="STRING" id="3702.Q9XIF8"/>
<dbReference type="iPTMnet" id="Q9XIF8"/>
<dbReference type="PaxDb" id="3702-AT1G59700.1"/>
<dbReference type="ProteomicsDB" id="247340"/>
<dbReference type="EnsemblPlants" id="AT1G59700.1">
    <property type="protein sequence ID" value="AT1G59700.1"/>
    <property type="gene ID" value="AT1G59700"/>
</dbReference>
<dbReference type="GeneID" id="842261"/>
<dbReference type="Gramene" id="AT1G59700.1">
    <property type="protein sequence ID" value="AT1G59700.1"/>
    <property type="gene ID" value="AT1G59700"/>
</dbReference>
<dbReference type="KEGG" id="ath:AT1G59700"/>
<dbReference type="Araport" id="AT1G59700"/>
<dbReference type="TAIR" id="AT1G59700">
    <property type="gene designation" value="GSTU16"/>
</dbReference>
<dbReference type="eggNOG" id="KOG0406">
    <property type="taxonomic scope" value="Eukaryota"/>
</dbReference>
<dbReference type="HOGENOM" id="CLU_011226_18_0_1"/>
<dbReference type="InParanoid" id="Q9XIF8"/>
<dbReference type="OMA" id="VWYSPYA"/>
<dbReference type="OrthoDB" id="4951845at2759"/>
<dbReference type="PhylomeDB" id="Q9XIF8"/>
<dbReference type="BioCyc" id="ARA:AT1G59700-MONOMER"/>
<dbReference type="PRO" id="PR:Q9XIF8"/>
<dbReference type="Proteomes" id="UP000006548">
    <property type="component" value="Chromosome 1"/>
</dbReference>
<dbReference type="ExpressionAtlas" id="Q9XIF8">
    <property type="expression patterns" value="baseline and differential"/>
</dbReference>
<dbReference type="GO" id="GO:0005737">
    <property type="term" value="C:cytoplasm"/>
    <property type="evidence" value="ECO:0000303"/>
    <property type="project" value="TAIR"/>
</dbReference>
<dbReference type="GO" id="GO:0005829">
    <property type="term" value="C:cytosol"/>
    <property type="evidence" value="ECO:0007005"/>
    <property type="project" value="TAIR"/>
</dbReference>
<dbReference type="GO" id="GO:0005634">
    <property type="term" value="C:nucleus"/>
    <property type="evidence" value="ECO:0007005"/>
    <property type="project" value="TAIR"/>
</dbReference>
<dbReference type="GO" id="GO:0004364">
    <property type="term" value="F:glutathione transferase activity"/>
    <property type="evidence" value="ECO:0007669"/>
    <property type="project" value="UniProtKB-EC"/>
</dbReference>
<dbReference type="GO" id="GO:0006749">
    <property type="term" value="P:glutathione metabolic process"/>
    <property type="evidence" value="ECO:0007669"/>
    <property type="project" value="InterPro"/>
</dbReference>
<dbReference type="GO" id="GO:0009407">
    <property type="term" value="P:toxin catabolic process"/>
    <property type="evidence" value="ECO:0000304"/>
    <property type="project" value="TAIR"/>
</dbReference>
<dbReference type="CDD" id="cd03185">
    <property type="entry name" value="GST_C_Tau"/>
    <property type="match status" value="1"/>
</dbReference>
<dbReference type="CDD" id="cd03058">
    <property type="entry name" value="GST_N_Tau"/>
    <property type="match status" value="1"/>
</dbReference>
<dbReference type="FunFam" id="3.40.30.10:FF:000044">
    <property type="entry name" value="Glutathione S-transferase GSTU6"/>
    <property type="match status" value="1"/>
</dbReference>
<dbReference type="FunFam" id="1.20.1050.10:FF:000016">
    <property type="entry name" value="Glutathione S-transferase U9"/>
    <property type="match status" value="1"/>
</dbReference>
<dbReference type="Gene3D" id="1.20.1050.10">
    <property type="match status" value="1"/>
</dbReference>
<dbReference type="Gene3D" id="3.40.30.10">
    <property type="entry name" value="Glutaredoxin"/>
    <property type="match status" value="1"/>
</dbReference>
<dbReference type="InterPro" id="IPR010987">
    <property type="entry name" value="Glutathione-S-Trfase_C-like"/>
</dbReference>
<dbReference type="InterPro" id="IPR036282">
    <property type="entry name" value="Glutathione-S-Trfase_C_sf"/>
</dbReference>
<dbReference type="InterPro" id="IPR004045">
    <property type="entry name" value="Glutathione_S-Trfase_N"/>
</dbReference>
<dbReference type="InterPro" id="IPR004046">
    <property type="entry name" value="GST_C"/>
</dbReference>
<dbReference type="InterPro" id="IPR045074">
    <property type="entry name" value="GST_C_Tau"/>
</dbReference>
<dbReference type="InterPro" id="IPR045073">
    <property type="entry name" value="Omega/Tau-like"/>
</dbReference>
<dbReference type="InterPro" id="IPR036249">
    <property type="entry name" value="Thioredoxin-like_sf"/>
</dbReference>
<dbReference type="PANTHER" id="PTHR11260:SF599">
    <property type="entry name" value="GLUTATHIONE S-TRANSFERASE U16"/>
    <property type="match status" value="1"/>
</dbReference>
<dbReference type="PANTHER" id="PTHR11260">
    <property type="entry name" value="GLUTATHIONE S-TRANSFERASE, GST, SUPERFAMILY, GST DOMAIN CONTAINING"/>
    <property type="match status" value="1"/>
</dbReference>
<dbReference type="Pfam" id="PF00043">
    <property type="entry name" value="GST_C"/>
    <property type="match status" value="1"/>
</dbReference>
<dbReference type="Pfam" id="PF02798">
    <property type="entry name" value="GST_N"/>
    <property type="match status" value="1"/>
</dbReference>
<dbReference type="SFLD" id="SFLDG01152">
    <property type="entry name" value="Main.3:_Omega-_and_Tau-like"/>
    <property type="match status" value="1"/>
</dbReference>
<dbReference type="SFLD" id="SFLDG00358">
    <property type="entry name" value="Main_(cytGST)"/>
    <property type="match status" value="1"/>
</dbReference>
<dbReference type="SUPFAM" id="SSF47616">
    <property type="entry name" value="GST C-terminal domain-like"/>
    <property type="match status" value="1"/>
</dbReference>
<dbReference type="SUPFAM" id="SSF52833">
    <property type="entry name" value="Thioredoxin-like"/>
    <property type="match status" value="1"/>
</dbReference>
<dbReference type="PROSITE" id="PS50405">
    <property type="entry name" value="GST_CTER"/>
    <property type="match status" value="1"/>
</dbReference>
<dbReference type="PROSITE" id="PS50404">
    <property type="entry name" value="GST_NTER"/>
    <property type="match status" value="1"/>
</dbReference>
<gene>
    <name type="primary">GSTU16</name>
    <name type="ordered locus">At1g59700</name>
    <name type="ORF">F23H11.1</name>
</gene>
<organism>
    <name type="scientific">Arabidopsis thaliana</name>
    <name type="common">Mouse-ear cress</name>
    <dbReference type="NCBI Taxonomy" id="3702"/>
    <lineage>
        <taxon>Eukaryota</taxon>
        <taxon>Viridiplantae</taxon>
        <taxon>Streptophyta</taxon>
        <taxon>Embryophyta</taxon>
        <taxon>Tracheophyta</taxon>
        <taxon>Spermatophyta</taxon>
        <taxon>Magnoliopsida</taxon>
        <taxon>eudicotyledons</taxon>
        <taxon>Gunneridae</taxon>
        <taxon>Pentapetalae</taxon>
        <taxon>rosids</taxon>
        <taxon>malvids</taxon>
        <taxon>Brassicales</taxon>
        <taxon>Brassicaceae</taxon>
        <taxon>Camelineae</taxon>
        <taxon>Arabidopsis</taxon>
    </lineage>
</organism>
<keyword id="KW-0963">Cytoplasm</keyword>
<keyword id="KW-0216">Detoxification</keyword>
<keyword id="KW-1185">Reference proteome</keyword>
<keyword id="KW-0346">Stress response</keyword>
<keyword id="KW-0808">Transferase</keyword>
<accession>Q9XIF8</accession>
<accession>Q94K12</accession>